<feature type="chain" id="PRO_0000050751" description="TELO2-interacting protein 1 homolog">
    <location>
        <begin position="1"/>
        <end position="1089"/>
    </location>
</feature>
<feature type="region of interest" description="Disordered" evidence="1">
    <location>
        <begin position="826"/>
        <end position="852"/>
    </location>
</feature>
<feature type="compositionally biased region" description="Basic and acidic residues" evidence="1">
    <location>
        <begin position="842"/>
        <end position="852"/>
    </location>
</feature>
<feature type="modified residue" description="Phosphoserine" evidence="11 12 13 14">
    <location>
        <position position="459"/>
    </location>
</feature>
<feature type="modified residue" description="Phosphoserine; by CK2" evidence="6 14">
    <location>
        <position position="828"/>
    </location>
</feature>
<feature type="sequence variant" id="VAR_088844" description="In NEDMIM; likely pathogenic." evidence="9">
    <location>
        <begin position="36"/>
        <end position="1089"/>
    </location>
</feature>
<feature type="sequence variant" id="VAR_088845" description="In NEDMIM; likely pathogenic; results in altered mTORC1 activity; decreased interaction with MTOR and RPTOR." evidence="9">
    <original>V</original>
    <variation>E</variation>
    <location>
        <position position="123"/>
    </location>
</feature>
<feature type="sequence variant" id="VAR_088846" description="In NEDMIM; uncertain significance." evidence="9">
    <original>W</original>
    <variation>G</variation>
    <location>
        <position position="279"/>
    </location>
</feature>
<feature type="sequence variant" id="VAR_088847" description="In NEDMIM; uncertain significance; results in altered mTORC1 activity." evidence="9">
    <original>S</original>
    <variation>P</variation>
    <location>
        <position position="402"/>
    </location>
</feature>
<feature type="sequence variant" id="VAR_088848" description="In NEDMIM; uncertain significance." evidence="9">
    <original>H</original>
    <variation>R</variation>
    <location>
        <position position="424"/>
    </location>
</feature>
<feature type="sequence variant" id="VAR_034033" description="In dbSNP:rs36059660.">
    <original>R</original>
    <variation>H</variation>
    <location>
        <position position="450"/>
    </location>
</feature>
<feature type="sequence variant" id="VAR_088849" description="In NEDMIM; likely pathogenic." evidence="9">
    <location>
        <begin position="490"/>
        <end position="1089"/>
    </location>
</feature>
<feature type="sequence variant" id="VAR_088850" description="In NEDMIM; uncertain significance." evidence="9">
    <original>I</original>
    <variation>T</variation>
    <location>
        <position position="634"/>
    </location>
</feature>
<feature type="sequence variant" id="VAR_014082" description="In dbSNP:rs1057238.">
    <original>A</original>
    <variation>V</variation>
    <location>
        <position position="671"/>
    </location>
</feature>
<feature type="sequence variant" id="VAR_049509" description="In dbSNP:rs6091654.">
    <original>K</original>
    <variation>E</variation>
    <location>
        <position position="751"/>
    </location>
</feature>
<feature type="sequence variant" id="VAR_088851" description="In NEDMIM; uncertain significance." evidence="9">
    <original>L</original>
    <variation>S</variation>
    <location>
        <position position="767"/>
    </location>
</feature>
<feature type="sequence variant" id="VAR_088852" description="In NEDMIM; likely pathogenic; results in altered mTORC1 activity; affects signal transduction in response to DNA damage." evidence="9">
    <original>S</original>
    <variation>L</variation>
    <location>
        <position position="838"/>
    </location>
</feature>
<feature type="sequence variant" id="VAR_088853" description="In NEDMIM; likely pathogenic; results in altered mTORC1 activity; affects signal transduction in response to DNA damage." evidence="9">
    <original>D</original>
    <variation>E</variation>
    <location>
        <position position="887"/>
    </location>
</feature>
<feature type="sequence variant" id="VAR_088854" description="In NEDMIM; likely pathogenic; affects signal transduction in response to DNA damage." evidence="7 9">
    <original>D</original>
    <variation>N</variation>
    <location>
        <position position="921"/>
    </location>
</feature>
<feature type="sequence variant" id="VAR_014083" description="In dbSNP:rs1064275.">
    <original>A</original>
    <variation>T</variation>
    <location>
        <position position="979"/>
    </location>
</feature>
<feature type="sequence variant" id="VAR_088855" description="In NEDMIM; uncertain significance." evidence="9">
    <original>L</original>
    <variation>R</variation>
    <location>
        <position position="993"/>
    </location>
</feature>
<feature type="sequence variant" id="VAR_088856" description="In NEDMIM; uncertain significance." evidence="9">
    <original>G</original>
    <variation>R</variation>
    <location>
        <position position="1000"/>
    </location>
</feature>
<feature type="sequence variant" id="VAR_034034" description="In dbSNP:rs34900517.">
    <original>R</original>
    <variation>K</variation>
    <location>
        <position position="1028"/>
    </location>
</feature>
<feature type="sequence variant" id="VAR_088857" description="In NEDMIM; uncertain significance." evidence="9">
    <original>V</original>
    <variation>M</variation>
    <location>
        <position position="1081"/>
    </location>
</feature>
<feature type="mutagenesis site" description="Abolishes phosphorylation by CK2 in response to growth factor deprivation and subsequent ubiquitination and degradation." evidence="6">
    <original>S</original>
    <variation>A</variation>
    <location>
        <position position="828"/>
    </location>
</feature>
<protein>
    <recommendedName>
        <fullName>TELO2-interacting protein 1 homolog</fullName>
    </recommendedName>
    <alternativeName>
        <fullName>Protein SMG10</fullName>
    </alternativeName>
</protein>
<keyword id="KW-0002">3D-structure</keyword>
<keyword id="KW-0963">Cytoplasm</keyword>
<keyword id="KW-0225">Disease variant</keyword>
<keyword id="KW-0991">Intellectual disability</keyword>
<keyword id="KW-0597">Phosphoprotein</keyword>
<keyword id="KW-1267">Proteomics identification</keyword>
<keyword id="KW-1185">Reference proteome</keyword>
<keyword id="KW-0832">Ubl conjugation</keyword>
<comment type="function">
    <text evidence="3 4 5 9">Regulator of the DNA damage response (DDR). Part of the TTT complex that is required to stabilize protein levels of the phosphatidylinositol 3-kinase-related protein kinase (PIKK) family proteins. The TTT complex is involved in the cellular resistance to DNA damage stresses, like ionizing radiation (IR), ultraviolet (UV) and mitomycin C (MMC). Together with the TTT complex and HSP90 may participate in the proper folding of newly synthesized PIKKs. Promotes assembly, stabilizes and maintains the activity of mTORC1 and mTORC2 complexes, which regulate cell growth and survival in response to nutrient and hormonal signals.</text>
</comment>
<comment type="subunit">
    <text evidence="2 3 4 5 6 8 9">Component of the TTT complex composed of TELO2, TTI1 and TTI2 (PubMed:20801936). Interacts with ATM, ATR, MTOR, PRKDC, RUVBL1, SMG1, TELO2, TRRAP and TTI2 (PubMed:20371770, PubMed:20427287, PubMed:20810650). Component of the mTORC1 and mTORC2 complexes (PubMed:23263282, PubMed:36724785). Interacts with WAC; WAC positively regulates MTOR activity by promoting the assembly of the TTT complex and the RUVBL complex composed of RUVBL1 and RUVBL2 into the TTT-RUVBL complex which leads to the dimerization of the mTORC1 complex and its subsequent activation (PubMed:26812014).</text>
</comment>
<comment type="interaction">
    <interactant intactId="EBI-1055680">
        <id>O43156</id>
    </interactant>
    <interactant intactId="EBI-495465">
        <id>Q13315</id>
        <label>ATM</label>
    </interactant>
    <organismsDiffer>false</organismsDiffer>
    <experiments>5</experiments>
</comment>
<comment type="interaction">
    <interactant intactId="EBI-1055680">
        <id>O43156</id>
    </interactant>
    <interactant intactId="EBI-968983">
        <id>Q13535</id>
        <label>ATR</label>
    </interactant>
    <organismsDiffer>false</organismsDiffer>
    <experiments>2</experiments>
</comment>
<comment type="interaction">
    <interactant intactId="EBI-1055680">
        <id>O43156</id>
    </interactant>
    <interactant intactId="EBI-2869927">
        <id>Q9UK97</id>
        <label>FBXO9</label>
    </interactant>
    <organismsDiffer>false</organismsDiffer>
    <experiments>5</experiments>
</comment>
<comment type="interaction">
    <interactant intactId="EBI-1055680">
        <id>O43156</id>
    </interactant>
    <interactant intactId="EBI-1043674">
        <id>Q9Y4R8</id>
        <label>TELO2</label>
    </interactant>
    <organismsDiffer>false</organismsDiffer>
    <experiments>7</experiments>
</comment>
<comment type="subcellular location">
    <subcellularLocation>
        <location evidence="6">Cytoplasm</location>
    </subcellularLocation>
</comment>
<comment type="tissue specificity">
    <text>Widely expressed.</text>
</comment>
<comment type="PTM">
    <text evidence="6">Phosphorylated at Ser-828 by CK2 following growth factor deprivation, leading to its subsequent ubiquitination by the SCF(FBXO9) complex. Phosphorylation by CK2 only takes place when TELO2 is bound to mTORC1, not mTORC2; leading to selective ubiquitination of mTORC1-associated protein.</text>
</comment>
<comment type="PTM">
    <text evidence="6">Ubiquitinated by the SCF(FBXO9) complex following phosphorylation by CK2 in response to growth factor deprivation, leading to its degradation by the proteasome. Only mTORC1-associated protein is ubiquitinated and degraded, leading to selective inactivation of mTORC1 to restrain cell growth and protein translation, while mTORC2 is activated due to the relief of feedback inhibition by mTORC1.</text>
</comment>
<comment type="disease" evidence="7 9">
    <disease id="DI-06721">
        <name>Neurodevelopmental disorder with microcephaly and movement abnormalities</name>
        <acronym>NEDMIM</acronym>
        <description>An autosomal recessive disorder characterized by global developmental delay, impaired intellectual development with language impairment ranging from delayed speech to non-verbal, and delayed walking with an abnormal gait. Affected individuals may show hypotonia or hypertonia with spasticity, ataxia, and choreoathetoid movements. Most patients have microcephaly, non-specific dysmorphic features and short stature. Additional variable features include ocular defects, seizures, brain malformations, and skeletal defects.</description>
        <dbReference type="MIM" id="620445"/>
    </disease>
    <text>The disease is caused by variants affecting the gene represented in this entry.</text>
</comment>
<comment type="similarity">
    <text evidence="10">Belongs to the tti1 family.</text>
</comment>
<comment type="sequence caution" evidence="10">
    <conflict type="erroneous initiation">
        <sequence resource="EMBL-CDS" id="BAA23702"/>
    </conflict>
    <text>Extended N-terminus.</text>
</comment>
<proteinExistence type="evidence at protein level"/>
<sequence length="1089" mass="122069">MAVFDTPEEAFGVLRPVCVQLTKTQTVENVEHLQTRLQAVSDSALQELQQYILFPLRFTLKTPGPKRERLIQSVVECLTFVLSSTCVKEQELLQELFSELSACLYSPSSQKPAAVSEELKLAVIQGLSTLMHSAYGDIILTFYEPSILPRLGFAVSLLLGLAEQEKSKQIKIAALKCLQVLLLQCDCQDHPRSLDELEQKQLGDLFASFLPGISTALTRLITGDFKQGHSIVVSSLKIFYKTVSFIMADEQLKRISKVQAKPAVEHRVAELMVYREADWVKKTGDKLTILIKKIIECVSVHPHWKVRLELVELVEDLLLKCSQSLVECAGPLLKALVGLVNDESPEIQAQCNKVLRHFADQKVVVGNKALADILSESLHSLATSLPRLMNSQDDQGKFSTLSLLLGYLKLLGPKINFVLNSVAHLQRLSKALIQVLELDVADIKIVEERRWNSDDLNASPKTSATQPWNRIQRRYFRFFTDERIFMLLRQVCQLLGYYGNLYLLVDHFMELYHQSVVYRKQAAMILNELVTGAAGLEVEDLHEKHIKTNPEELREIVTSILEEYTSQENWYLVTCLETEEMGEELMMEHPGLQAITSGEHTCQVTSFLAFSKPSPTICSMNSNIWQICIQLEGIGQFAYALGKDFCLLLMSALYPVLEKAGDQTLLISQVATSTMMDVCRACGYDSLQHLINQNSDYLVNGISLNLRHLALHPHTPKVLEVMLRNSDANLLPLVADVVQDVLATLDQFYDKRAASFVSVLHALMAALAQWFPDTGNLGHLQEQSLGEEGSHLNQRPAALEKSTTTAEDIEQFLLNYLKEKDVADGNVSDFDNEEEEQSVPPKVDENDTRPDVEPPLPLQIQIAMDVMERCIHLLSDKNLQIRLKVLDVLDLCVVVLQSHKNQLLPLAHQAWPSLVHRLTRDAPLAVLRAFKVLRTLGSKCGDFLRSRFCKDVLPKLAGSLVTQAPISARAGPVYSHTLAFKLQLAVLQGLGPLCERLDLGEGDLNKVADACLIYLSVKQPVKLQEAARSVFLHLMKVDPDSTWFLLNELYCPVQFTPPHPSLHPVQLHGASGQQNPYTTNVLQLLKELQ</sequence>
<gene>
    <name type="primary">TTI1</name>
    <name type="synonym">KIAA0406</name>
    <name type="synonym">SMG10</name>
</gene>
<reference key="1">
    <citation type="journal article" date="1997" name="DNA Res.">
        <title>Prediction of the coding sequences of unidentified human genes. VIII. 78 new cDNA clones from brain which code for large proteins in vitro.</title>
        <authorList>
            <person name="Ishikawa K."/>
            <person name="Nagase T."/>
            <person name="Nakajima D."/>
            <person name="Seki N."/>
            <person name="Ohira M."/>
            <person name="Miyajima N."/>
            <person name="Tanaka A."/>
            <person name="Kotani H."/>
            <person name="Nomura N."/>
            <person name="Ohara O."/>
        </authorList>
    </citation>
    <scope>NUCLEOTIDE SEQUENCE [LARGE SCALE MRNA]</scope>
    <source>
        <tissue>Brain</tissue>
    </source>
</reference>
<reference key="2">
    <citation type="journal article" date="2010" name="J. Biol. Chem.">
        <title>Tti1 and Tel2 are critical factors in mammalian target of rapamycin complex assembly.</title>
        <authorList>
            <person name="Kaizuka T."/>
            <person name="Hara T."/>
            <person name="Oshiro N."/>
            <person name="Kikkawa U."/>
            <person name="Yonezawa K."/>
            <person name="Takehana K."/>
            <person name="Iemura S."/>
            <person name="Natsume T."/>
            <person name="Mizushima N."/>
        </authorList>
    </citation>
    <scope>NUCLEOTIDE SEQUENCE [MRNA]</scope>
    <scope>FUNCTION</scope>
    <scope>INTERACTION WITH TELO2; MTOR; ATM; ATR; PRKDC; SMG1 AND TRRAP</scope>
</reference>
<reference key="3">
    <citation type="journal article" date="2001" name="Nature">
        <title>The DNA sequence and comparative analysis of human chromosome 20.</title>
        <authorList>
            <person name="Deloukas P."/>
            <person name="Matthews L.H."/>
            <person name="Ashurst J.L."/>
            <person name="Burton J."/>
            <person name="Gilbert J.G.R."/>
            <person name="Jones M."/>
            <person name="Stavrides G."/>
            <person name="Almeida J.P."/>
            <person name="Babbage A.K."/>
            <person name="Bagguley C.L."/>
            <person name="Bailey J."/>
            <person name="Barlow K.F."/>
            <person name="Bates K.N."/>
            <person name="Beard L.M."/>
            <person name="Beare D.M."/>
            <person name="Beasley O.P."/>
            <person name="Bird C.P."/>
            <person name="Blakey S.E."/>
            <person name="Bridgeman A.M."/>
            <person name="Brown A.J."/>
            <person name="Buck D."/>
            <person name="Burrill W.D."/>
            <person name="Butler A.P."/>
            <person name="Carder C."/>
            <person name="Carter N.P."/>
            <person name="Chapman J.C."/>
            <person name="Clamp M."/>
            <person name="Clark G."/>
            <person name="Clark L.N."/>
            <person name="Clark S.Y."/>
            <person name="Clee C.M."/>
            <person name="Clegg S."/>
            <person name="Cobley V.E."/>
            <person name="Collier R.E."/>
            <person name="Connor R.E."/>
            <person name="Corby N.R."/>
            <person name="Coulson A."/>
            <person name="Coville G.J."/>
            <person name="Deadman R."/>
            <person name="Dhami P.D."/>
            <person name="Dunn M."/>
            <person name="Ellington A.G."/>
            <person name="Frankland J.A."/>
            <person name="Fraser A."/>
            <person name="French L."/>
            <person name="Garner P."/>
            <person name="Grafham D.V."/>
            <person name="Griffiths C."/>
            <person name="Griffiths M.N.D."/>
            <person name="Gwilliam R."/>
            <person name="Hall R.E."/>
            <person name="Hammond S."/>
            <person name="Harley J.L."/>
            <person name="Heath P.D."/>
            <person name="Ho S."/>
            <person name="Holden J.L."/>
            <person name="Howden P.J."/>
            <person name="Huckle E."/>
            <person name="Hunt A.R."/>
            <person name="Hunt S.E."/>
            <person name="Jekosch K."/>
            <person name="Johnson C.M."/>
            <person name="Johnson D."/>
            <person name="Kay M.P."/>
            <person name="Kimberley A.M."/>
            <person name="King A."/>
            <person name="Knights A."/>
            <person name="Laird G.K."/>
            <person name="Lawlor S."/>
            <person name="Lehvaeslaiho M.H."/>
            <person name="Leversha M.A."/>
            <person name="Lloyd C."/>
            <person name="Lloyd D.M."/>
            <person name="Lovell J.D."/>
            <person name="Marsh V.L."/>
            <person name="Martin S.L."/>
            <person name="McConnachie L.J."/>
            <person name="McLay K."/>
            <person name="McMurray A.A."/>
            <person name="Milne S.A."/>
            <person name="Mistry D."/>
            <person name="Moore M.J.F."/>
            <person name="Mullikin J.C."/>
            <person name="Nickerson T."/>
            <person name="Oliver K."/>
            <person name="Parker A."/>
            <person name="Patel R."/>
            <person name="Pearce T.A.V."/>
            <person name="Peck A.I."/>
            <person name="Phillimore B.J.C.T."/>
            <person name="Prathalingam S.R."/>
            <person name="Plumb R.W."/>
            <person name="Ramsay H."/>
            <person name="Rice C.M."/>
            <person name="Ross M.T."/>
            <person name="Scott C.E."/>
            <person name="Sehra H.K."/>
            <person name="Shownkeen R."/>
            <person name="Sims S."/>
            <person name="Skuce C.D."/>
            <person name="Smith M.L."/>
            <person name="Soderlund C."/>
            <person name="Steward C.A."/>
            <person name="Sulston J.E."/>
            <person name="Swann R.M."/>
            <person name="Sycamore N."/>
            <person name="Taylor R."/>
            <person name="Tee L."/>
            <person name="Thomas D.W."/>
            <person name="Thorpe A."/>
            <person name="Tracey A."/>
            <person name="Tromans A.C."/>
            <person name="Vaudin M."/>
            <person name="Wall M."/>
            <person name="Wallis J.M."/>
            <person name="Whitehead S.L."/>
            <person name="Whittaker P."/>
            <person name="Willey D.L."/>
            <person name="Williams L."/>
            <person name="Williams S.A."/>
            <person name="Wilming L."/>
            <person name="Wray P.W."/>
            <person name="Hubbard T."/>
            <person name="Durbin R.M."/>
            <person name="Bentley D.R."/>
            <person name="Beck S."/>
            <person name="Rogers J."/>
        </authorList>
    </citation>
    <scope>NUCLEOTIDE SEQUENCE [LARGE SCALE GENOMIC DNA]</scope>
</reference>
<reference key="4">
    <citation type="submission" date="2005-09" db="EMBL/GenBank/DDBJ databases">
        <authorList>
            <person name="Mural R.J."/>
            <person name="Istrail S."/>
            <person name="Sutton G."/>
            <person name="Florea L."/>
            <person name="Halpern A.L."/>
            <person name="Mobarry C.M."/>
            <person name="Lippert R."/>
            <person name="Walenz B."/>
            <person name="Shatkay H."/>
            <person name="Dew I."/>
            <person name="Miller J.R."/>
            <person name="Flanigan M.J."/>
            <person name="Edwards N.J."/>
            <person name="Bolanos R."/>
            <person name="Fasulo D."/>
            <person name="Halldorsson B.V."/>
            <person name="Hannenhalli S."/>
            <person name="Turner R."/>
            <person name="Yooseph S."/>
            <person name="Lu F."/>
            <person name="Nusskern D.R."/>
            <person name="Shue B.C."/>
            <person name="Zheng X.H."/>
            <person name="Zhong F."/>
            <person name="Delcher A.L."/>
            <person name="Huson D.H."/>
            <person name="Kravitz S.A."/>
            <person name="Mouchard L."/>
            <person name="Reinert K."/>
            <person name="Remington K.A."/>
            <person name="Clark A.G."/>
            <person name="Waterman M.S."/>
            <person name="Eichler E.E."/>
            <person name="Adams M.D."/>
            <person name="Hunkapiller M.W."/>
            <person name="Myers E.W."/>
            <person name="Venter J.C."/>
        </authorList>
    </citation>
    <scope>NUCLEOTIDE SEQUENCE [LARGE SCALE GENOMIC DNA]</scope>
</reference>
<reference key="5">
    <citation type="journal article" date="2004" name="Genome Res.">
        <title>The status, quality, and expansion of the NIH full-length cDNA project: the Mammalian Gene Collection (MGC).</title>
        <authorList>
            <consortium name="The MGC Project Team"/>
        </authorList>
    </citation>
    <scope>NUCLEOTIDE SEQUENCE [LARGE SCALE MRNA]</scope>
    <source>
        <tissue>Cervix</tissue>
        <tissue>Testis</tissue>
    </source>
</reference>
<reference key="6">
    <citation type="journal article" date="2006" name="Cell">
        <title>Global, in vivo, and site-specific phosphorylation dynamics in signaling networks.</title>
        <authorList>
            <person name="Olsen J.V."/>
            <person name="Blagoev B."/>
            <person name="Gnad F."/>
            <person name="Macek B."/>
            <person name="Kumar C."/>
            <person name="Mortensen P."/>
            <person name="Mann M."/>
        </authorList>
    </citation>
    <scope>PHOSPHORYLATION [LARGE SCALE ANALYSIS] AT SER-459</scope>
    <scope>IDENTIFICATION BY MASS SPECTROMETRY [LARGE SCALE ANALYSIS]</scope>
    <source>
        <tissue>Cervix carcinoma</tissue>
    </source>
</reference>
<reference key="7">
    <citation type="journal article" date="2008" name="Mol. Cell">
        <title>Kinase-selective enrichment enables quantitative phosphoproteomics of the kinome across the cell cycle.</title>
        <authorList>
            <person name="Daub H."/>
            <person name="Olsen J.V."/>
            <person name="Bairlein M."/>
            <person name="Gnad F."/>
            <person name="Oppermann F.S."/>
            <person name="Korner R."/>
            <person name="Greff Z."/>
            <person name="Keri G."/>
            <person name="Stemmann O."/>
            <person name="Mann M."/>
        </authorList>
    </citation>
    <scope>PHOSPHORYLATION [LARGE SCALE ANALYSIS] AT SER-459</scope>
    <scope>IDENTIFICATION BY MASS SPECTROMETRY [LARGE SCALE ANALYSIS]</scope>
    <source>
        <tissue>Cervix carcinoma</tissue>
    </source>
</reference>
<reference key="8">
    <citation type="journal article" date="2010" name="Genes Dev.">
        <title>A genetic screen identifies the Triple T complex required for DNA damage signaling and ATM and ATR stability.</title>
        <authorList>
            <person name="Hurov K.E."/>
            <person name="Cotta-Ramusino C."/>
            <person name="Elledge S.J."/>
        </authorList>
    </citation>
    <scope>FUNCTION</scope>
    <scope>INTERACTION WITH ATM; ATR; MTOR; PRKDC; SMG1; TELO2 AND TTI2</scope>
    <scope>IDENTIFICATION BY MASS SPECTROMETRY</scope>
</reference>
<reference key="9">
    <citation type="journal article" date="2010" name="Genes Dev.">
        <title>Tel2 structure and function in the Hsp90-dependent maturation of mTOR and ATR complexes.</title>
        <authorList>
            <person name="Takai H."/>
            <person name="Xie Y."/>
            <person name="de Lange T."/>
            <person name="Pavletich N.P."/>
        </authorList>
    </citation>
    <scope>FUNCTION</scope>
    <scope>INTERACTION WITH TTI2 AND TELO2</scope>
</reference>
<reference key="10">
    <citation type="journal article" date="2010" name="Sci. Signal.">
        <title>AAA+ proteins RUVBL1 and RUVBL2 coordinate PIKK activity and function in nonsense-mediated mRNA decay.</title>
        <authorList>
            <person name="Izumi N."/>
            <person name="Yamashita A."/>
            <person name="Iwamatsu A."/>
            <person name="Kurata R."/>
            <person name="Nakamura H."/>
            <person name="Saari B."/>
            <person name="Hirano H."/>
            <person name="Anderson P."/>
            <person name="Ohno S."/>
        </authorList>
    </citation>
    <scope>INTERACTION WITH RUVBL1 AND SMG1</scope>
</reference>
<reference key="11">
    <citation type="journal article" date="2010" name="Sci. Signal.">
        <title>Quantitative phosphoproteomics reveals widespread full phosphorylation site occupancy during mitosis.</title>
        <authorList>
            <person name="Olsen J.V."/>
            <person name="Vermeulen M."/>
            <person name="Santamaria A."/>
            <person name="Kumar C."/>
            <person name="Miller M.L."/>
            <person name="Jensen L.J."/>
            <person name="Gnad F."/>
            <person name="Cox J."/>
            <person name="Jensen T.S."/>
            <person name="Nigg E.A."/>
            <person name="Brunak S."/>
            <person name="Mann M."/>
        </authorList>
    </citation>
    <scope>PHOSPHORYLATION [LARGE SCALE ANALYSIS] AT SER-459</scope>
    <scope>IDENTIFICATION BY MASS SPECTROMETRY [LARGE SCALE ANALYSIS]</scope>
    <source>
        <tissue>Cervix carcinoma</tissue>
    </source>
</reference>
<reference key="12">
    <citation type="journal article" date="2011" name="BMC Syst. Biol.">
        <title>Initial characterization of the human central proteome.</title>
        <authorList>
            <person name="Burkard T.R."/>
            <person name="Planyavsky M."/>
            <person name="Kaupe I."/>
            <person name="Breitwieser F.P."/>
            <person name="Buerckstuemmer T."/>
            <person name="Bennett K.L."/>
            <person name="Superti-Furga G."/>
            <person name="Colinge J."/>
        </authorList>
    </citation>
    <scope>IDENTIFICATION BY MASS SPECTROMETRY [LARGE SCALE ANALYSIS]</scope>
</reference>
<reference key="13">
    <citation type="journal article" date="2013" name="J. Proteome Res.">
        <title>Toward a comprehensive characterization of a human cancer cell phosphoproteome.</title>
        <authorList>
            <person name="Zhou H."/>
            <person name="Di Palma S."/>
            <person name="Preisinger C."/>
            <person name="Peng M."/>
            <person name="Polat A.N."/>
            <person name="Heck A.J."/>
            <person name="Mohammed S."/>
        </authorList>
    </citation>
    <scope>PHOSPHORYLATION [LARGE SCALE ANALYSIS] AT SER-459 AND SER-828</scope>
    <scope>IDENTIFICATION BY MASS SPECTROMETRY [LARGE SCALE ANALYSIS]</scope>
    <source>
        <tissue>Cervix carcinoma</tissue>
        <tissue>Erythroleukemia</tissue>
    </source>
</reference>
<reference key="14">
    <citation type="journal article" date="2013" name="Nat. Cell Biol.">
        <title>SCF(Fbxo9) and CK2 direct the cellular response to growth factor withdrawal via Tel2/Tti1 degradation and promote survival in multiple myeloma.</title>
        <authorList>
            <person name="Fernandez-Saiz V."/>
            <person name="Targosz B.S."/>
            <person name="Lemeer S."/>
            <person name="Eichner R."/>
            <person name="Langer C."/>
            <person name="Bullinger L."/>
            <person name="Reiter C."/>
            <person name="Slotta-Huspenina J."/>
            <person name="Schroeder S."/>
            <person name="Knorn A.M."/>
            <person name="Kurutz J."/>
            <person name="Peschel C."/>
            <person name="Pagano M."/>
            <person name="Kuster B."/>
            <person name="Bassermann F."/>
        </authorList>
    </citation>
    <scope>IDENTIFICATION IN THE MTORC1 COMPLEX</scope>
    <scope>IDENTIFICATION IN THE MTORC2 COMPLEX</scope>
    <scope>SUBCELLULAR LOCATION</scope>
    <scope>PHOSPHORYLATION AT SER-828</scope>
    <scope>UBIQUITINATION</scope>
    <scope>MUTAGENESIS OF SER-828</scope>
</reference>
<reference key="15">
    <citation type="journal article" date="2016" name="Dev. Cell">
        <title>WAC regulates mTOR activity by acting as an adaptor for the TTT and Pontin/Reptin complexes.</title>
        <authorList>
            <person name="David-Morrison G."/>
            <person name="Xu Z."/>
            <person name="Rui Y.N."/>
            <person name="Charng W.L."/>
            <person name="Jaiswal M."/>
            <person name="Yamamoto S."/>
            <person name="Xiong B."/>
            <person name="Zhang K."/>
            <person name="Sandoval H."/>
            <person name="Duraine L."/>
            <person name="Zuo Z."/>
            <person name="Zhang S."/>
            <person name="Bellen H.J."/>
        </authorList>
    </citation>
    <scope>INTERACTION WITH WAC</scope>
</reference>
<reference key="16">
    <citation type="journal article" date="2015" name="Neuron">
        <title>Genes that affect brain structure and function identified by rare variant analyses of mendelian neurologic disease.</title>
        <authorList>
            <person name="Karaca E."/>
            <person name="Harel T."/>
            <person name="Pehlivan D."/>
            <person name="Jhangiani S.N."/>
            <person name="Gambin T."/>
            <person name="Coban Akdemir Z."/>
            <person name="Gonzaga-Jauregui C."/>
            <person name="Erdin S."/>
            <person name="Bayram Y."/>
            <person name="Campbell I.M."/>
            <person name="Hunter J.V."/>
            <person name="Atik M.M."/>
            <person name="Van Esch H."/>
            <person name="Yuan B."/>
            <person name="Wiszniewski W."/>
            <person name="Isikay S."/>
            <person name="Yesil G."/>
            <person name="Yuregir O.O."/>
            <person name="Tug Bozdogan S."/>
            <person name="Aslan H."/>
            <person name="Aydin H."/>
            <person name="Tos T."/>
            <person name="Aksoy A."/>
            <person name="De Vivo D.C."/>
            <person name="Jain P."/>
            <person name="Geckinli B.B."/>
            <person name="Sezer O."/>
            <person name="Gul D."/>
            <person name="Durmaz B."/>
            <person name="Cogulu O."/>
            <person name="Ozkinay F."/>
            <person name="Topcu V."/>
            <person name="Candan S."/>
            <person name="Cebi A.H."/>
            <person name="Ikbal M."/>
            <person name="Yilmaz Gulec E."/>
            <person name="Gezdirici A."/>
            <person name="Koparir E."/>
            <person name="Ekici F."/>
            <person name="Coskun S."/>
            <person name="Cicek S."/>
            <person name="Karaer K."/>
            <person name="Koparir A."/>
            <person name="Duz M.B."/>
            <person name="Kirat E."/>
            <person name="Fenercioglu E."/>
            <person name="Ulucan H."/>
            <person name="Seven M."/>
            <person name="Guran T."/>
            <person name="Elcioglu N."/>
            <person name="Yildirim M.S."/>
            <person name="Aktas D."/>
            <person name="Alikasifoglu M."/>
            <person name="Ture M."/>
            <person name="Yakut T."/>
            <person name="Overton J.D."/>
            <person name="Yuksel A."/>
            <person name="Ozen M."/>
            <person name="Muzny D.M."/>
            <person name="Adams D.R."/>
            <person name="Boerwinkle E."/>
            <person name="Chung W.K."/>
            <person name="Gibbs R.A."/>
            <person name="Lupski J.R."/>
        </authorList>
    </citation>
    <scope>VARIANT NEDMIM ASN-921</scope>
</reference>
<reference key="17">
    <citation type="journal article" date="2023" name="Am. J. Hum. Genet.">
        <title>Bi-allelic TTI1 variants cause an autosomal-recessive neurodevelopmental disorder with microcephaly.</title>
        <authorList>
            <person name="Serey-Gaut M."/>
            <person name="Cortes M."/>
            <person name="Makrythanasis P."/>
            <person name="Suri M."/>
            <person name="Taylor A.M.R."/>
            <person name="Sullivan J.A."/>
            <person name="Asleh A.N."/>
            <person name="Mitra J."/>
            <person name="Dar M.A."/>
            <person name="McNamara A."/>
            <person name="Shashi V."/>
            <person name="Dugan S."/>
            <person name="Song X."/>
            <person name="Rosenfeld J.A."/>
            <person name="Cabrol C."/>
            <person name="Iwaszkiewicz J."/>
            <person name="Zoete V."/>
            <person name="Pehlivan D."/>
            <person name="Akdemir Z.C."/>
            <person name="Roeder E.R."/>
            <person name="Littlejohn R.O."/>
            <person name="Dibra H.K."/>
            <person name="Byrd P.J."/>
            <person name="Stewart G.S."/>
            <person name="Geckinli B.B."/>
            <person name="Posey J."/>
            <person name="Westman R."/>
            <person name="Jungbluth C."/>
            <person name="Eason J."/>
            <person name="Sachdev R."/>
            <person name="Evans C.A."/>
            <person name="Lemire G."/>
            <person name="VanNoy G.E."/>
            <person name="O'Donnell-Luria A."/>
            <person name="Mau-Them F.T."/>
            <person name="Juven A."/>
            <person name="Piard J."/>
            <person name="Nixon C.Y."/>
            <person name="Zhu Y."/>
            <person name="Ha T."/>
            <person name="Buckley M.F."/>
            <person name="Thauvin C."/>
            <person name="Essien Umanah G.K."/>
            <person name="Van Maldergem L."/>
            <person name="Lupski J.R."/>
            <person name="Roscioli T."/>
            <person name="Dawson V.L."/>
            <person name="Dawson T.M."/>
            <person name="Antonarakis S.E."/>
        </authorList>
    </citation>
    <scope>VARIANTS NEDMIM 36-ARG--GLN-1089 DEL; GLU-123; GLY-279; PRO-402; ARG-424; 490-GLN--GLN-1089 DEL; THR-634; SER-767; LEU-838; GLU-887; ASN-921; ARG-993; ARG-1000 AND MET-1081</scope>
    <scope>INVOLVEMENT IN NEDMIM</scope>
    <scope>CHARACTERIZATION OF VARIANTS NEDMIM GLU-123; PRO-402; SER-767; LEU-838; GLU-887 AND ASN-921</scope>
    <scope>IDENTIFICATION IN THE MTORC1 COMPLEX</scope>
    <scope>IDENTIFICATION IN THE MTORC2 COMPLEX</scope>
    <scope>FUNCTION</scope>
</reference>
<accession>O43156</accession>
<accession>D6W4K3</accession>
<accession>Q5JX67</accession>
<accession>Q96A38</accession>
<accession>Q9BR47</accession>
<accession>Q9H4K0</accession>
<evidence type="ECO:0000256" key="1">
    <source>
        <dbReference type="SAM" id="MobiDB-lite"/>
    </source>
</evidence>
<evidence type="ECO:0000269" key="2">
    <source>
    </source>
</evidence>
<evidence type="ECO:0000269" key="3">
    <source>
    </source>
</evidence>
<evidence type="ECO:0000269" key="4">
    <source>
    </source>
</evidence>
<evidence type="ECO:0000269" key="5">
    <source>
    </source>
</evidence>
<evidence type="ECO:0000269" key="6">
    <source>
    </source>
</evidence>
<evidence type="ECO:0000269" key="7">
    <source>
    </source>
</evidence>
<evidence type="ECO:0000269" key="8">
    <source>
    </source>
</evidence>
<evidence type="ECO:0000269" key="9">
    <source>
    </source>
</evidence>
<evidence type="ECO:0000305" key="10"/>
<evidence type="ECO:0007744" key="11">
    <source>
    </source>
</evidence>
<evidence type="ECO:0007744" key="12">
    <source>
    </source>
</evidence>
<evidence type="ECO:0007744" key="13">
    <source>
    </source>
</evidence>
<evidence type="ECO:0007744" key="14">
    <source>
    </source>
</evidence>
<name>TTI1_HUMAN</name>
<organism>
    <name type="scientific">Homo sapiens</name>
    <name type="common">Human</name>
    <dbReference type="NCBI Taxonomy" id="9606"/>
    <lineage>
        <taxon>Eukaryota</taxon>
        <taxon>Metazoa</taxon>
        <taxon>Chordata</taxon>
        <taxon>Craniata</taxon>
        <taxon>Vertebrata</taxon>
        <taxon>Euteleostomi</taxon>
        <taxon>Mammalia</taxon>
        <taxon>Eutheria</taxon>
        <taxon>Euarchontoglires</taxon>
        <taxon>Primates</taxon>
        <taxon>Haplorrhini</taxon>
        <taxon>Catarrhini</taxon>
        <taxon>Hominidae</taxon>
        <taxon>Homo</taxon>
    </lineage>
</organism>
<dbReference type="EMBL" id="AB007866">
    <property type="protein sequence ID" value="BAA23702.2"/>
    <property type="status" value="ALT_INIT"/>
    <property type="molecule type" value="mRNA"/>
</dbReference>
<dbReference type="EMBL" id="BR000854">
    <property type="protein sequence ID" value="FAA00688.1"/>
    <property type="molecule type" value="mRNA"/>
</dbReference>
<dbReference type="EMBL" id="AL109823">
    <property type="status" value="NOT_ANNOTATED_CDS"/>
    <property type="molecule type" value="Genomic_DNA"/>
</dbReference>
<dbReference type="EMBL" id="CH471077">
    <property type="protein sequence ID" value="EAW76047.1"/>
    <property type="molecule type" value="Genomic_DNA"/>
</dbReference>
<dbReference type="EMBL" id="CH471077">
    <property type="protein sequence ID" value="EAW76048.1"/>
    <property type="molecule type" value="Genomic_DNA"/>
</dbReference>
<dbReference type="EMBL" id="BC013121">
    <property type="protein sequence ID" value="AAH13121.1"/>
    <property type="molecule type" value="mRNA"/>
</dbReference>
<dbReference type="EMBL" id="BC013755">
    <property type="protein sequence ID" value="AAH13755.1"/>
    <property type="molecule type" value="mRNA"/>
</dbReference>
<dbReference type="CCDS" id="CCDS13300.1"/>
<dbReference type="PIR" id="T00052">
    <property type="entry name" value="T00052"/>
</dbReference>
<dbReference type="RefSeq" id="NP_001290386.1">
    <property type="nucleotide sequence ID" value="NM_001303457.2"/>
</dbReference>
<dbReference type="RefSeq" id="NP_055472.1">
    <property type="nucleotide sequence ID" value="NM_014657.3"/>
</dbReference>
<dbReference type="RefSeq" id="XP_047296562.1">
    <property type="nucleotide sequence ID" value="XM_047440606.1"/>
</dbReference>
<dbReference type="RefSeq" id="XP_054180229.1">
    <property type="nucleotide sequence ID" value="XM_054324254.1"/>
</dbReference>
<dbReference type="PDB" id="7F4U">
    <property type="method" value="EM"/>
    <property type="resolution" value="4.20 A"/>
    <property type="chains" value="B=1-1089"/>
</dbReference>
<dbReference type="PDB" id="7OLE">
    <property type="method" value="EM"/>
    <property type="resolution" value="3.41 A"/>
    <property type="chains" value="H=1-1089"/>
</dbReference>
<dbReference type="PDBsum" id="7F4U"/>
<dbReference type="PDBsum" id="7OLE"/>
<dbReference type="EMDB" id="EMD-31454"/>
<dbReference type="SMR" id="O43156"/>
<dbReference type="BioGRID" id="115030">
    <property type="interactions" value="134"/>
</dbReference>
<dbReference type="ComplexPortal" id="CPX-6148">
    <property type="entry name" value="TTT complex"/>
</dbReference>
<dbReference type="CORUM" id="O43156"/>
<dbReference type="DIP" id="DIP-50660N"/>
<dbReference type="FunCoup" id="O43156">
    <property type="interactions" value="2632"/>
</dbReference>
<dbReference type="IntAct" id="O43156">
    <property type="interactions" value="89"/>
</dbReference>
<dbReference type="MINT" id="O43156"/>
<dbReference type="STRING" id="9606.ENSP00000362547"/>
<dbReference type="GlyGen" id="O43156">
    <property type="glycosylation" value="1 site, 1 O-linked glycan (1 site)"/>
</dbReference>
<dbReference type="iPTMnet" id="O43156"/>
<dbReference type="PhosphoSitePlus" id="O43156"/>
<dbReference type="BioMuta" id="TTI1"/>
<dbReference type="jPOST" id="O43156"/>
<dbReference type="MassIVE" id="O43156"/>
<dbReference type="PaxDb" id="9606-ENSP00000362547"/>
<dbReference type="PeptideAtlas" id="O43156"/>
<dbReference type="ProteomicsDB" id="48776"/>
<dbReference type="Pumba" id="O43156"/>
<dbReference type="Antibodypedia" id="57267">
    <property type="antibodies" value="122 antibodies from 22 providers"/>
</dbReference>
<dbReference type="DNASU" id="9675"/>
<dbReference type="Ensembl" id="ENST00000373447.8">
    <property type="protein sequence ID" value="ENSP00000362546.3"/>
    <property type="gene ID" value="ENSG00000101407.13"/>
</dbReference>
<dbReference type="Ensembl" id="ENST00000373448.6">
    <property type="protein sequence ID" value="ENSP00000362547.2"/>
    <property type="gene ID" value="ENSG00000101407.13"/>
</dbReference>
<dbReference type="Ensembl" id="ENST00000449821.1">
    <property type="protein sequence ID" value="ENSP00000407270.1"/>
    <property type="gene ID" value="ENSG00000101407.13"/>
</dbReference>
<dbReference type="GeneID" id="9675"/>
<dbReference type="KEGG" id="hsa:9675"/>
<dbReference type="MANE-Select" id="ENST00000373447.8">
    <property type="protein sequence ID" value="ENSP00000362546.3"/>
    <property type="RefSeq nucleotide sequence ID" value="NM_001303457.2"/>
    <property type="RefSeq protein sequence ID" value="NP_001290386.1"/>
</dbReference>
<dbReference type="UCSC" id="uc002xhl.4">
    <property type="organism name" value="human"/>
</dbReference>
<dbReference type="AGR" id="HGNC:29029"/>
<dbReference type="CTD" id="9675"/>
<dbReference type="DisGeNET" id="9675"/>
<dbReference type="GeneCards" id="TTI1"/>
<dbReference type="HGNC" id="HGNC:29029">
    <property type="gene designation" value="TTI1"/>
</dbReference>
<dbReference type="HPA" id="ENSG00000101407">
    <property type="expression patterns" value="Low tissue specificity"/>
</dbReference>
<dbReference type="MalaCards" id="TTI1"/>
<dbReference type="MIM" id="614425">
    <property type="type" value="gene"/>
</dbReference>
<dbReference type="MIM" id="620445">
    <property type="type" value="phenotype"/>
</dbReference>
<dbReference type="neXtProt" id="NX_O43156"/>
<dbReference type="OpenTargets" id="ENSG00000101407"/>
<dbReference type="PharmGKB" id="PA165392722"/>
<dbReference type="VEuPathDB" id="HostDB:ENSG00000101407"/>
<dbReference type="eggNOG" id="KOG4524">
    <property type="taxonomic scope" value="Eukaryota"/>
</dbReference>
<dbReference type="GeneTree" id="ENSGT00390000009748"/>
<dbReference type="HOGENOM" id="CLU_004815_0_0_1"/>
<dbReference type="InParanoid" id="O43156"/>
<dbReference type="OMA" id="PHPKKPW"/>
<dbReference type="OrthoDB" id="49511at2759"/>
<dbReference type="PAN-GO" id="O43156">
    <property type="GO annotations" value="3 GO annotations based on evolutionary models"/>
</dbReference>
<dbReference type="PhylomeDB" id="O43156"/>
<dbReference type="TreeFam" id="TF315296"/>
<dbReference type="PathwayCommons" id="O43156"/>
<dbReference type="SignaLink" id="O43156"/>
<dbReference type="SIGNOR" id="O43156"/>
<dbReference type="BioGRID-ORCS" id="9675">
    <property type="hits" value="655 hits in 1165 CRISPR screens"/>
</dbReference>
<dbReference type="ChiTaRS" id="TTI1">
    <property type="organism name" value="human"/>
</dbReference>
<dbReference type="GenomeRNAi" id="9675"/>
<dbReference type="Pharos" id="O43156">
    <property type="development level" value="Tbio"/>
</dbReference>
<dbReference type="PRO" id="PR:O43156"/>
<dbReference type="Proteomes" id="UP000005640">
    <property type="component" value="Chromosome 20"/>
</dbReference>
<dbReference type="RNAct" id="O43156">
    <property type="molecule type" value="protein"/>
</dbReference>
<dbReference type="Bgee" id="ENSG00000101407">
    <property type="expression patterns" value="Expressed in secondary oocyte and 210 other cell types or tissues"/>
</dbReference>
<dbReference type="ExpressionAtlas" id="O43156">
    <property type="expression patterns" value="baseline and differential"/>
</dbReference>
<dbReference type="GO" id="GO:0005737">
    <property type="term" value="C:cytoplasm"/>
    <property type="evidence" value="ECO:0000314"/>
    <property type="project" value="UniProtKB"/>
</dbReference>
<dbReference type="GO" id="GO:0005634">
    <property type="term" value="C:nucleus"/>
    <property type="evidence" value="ECO:0000303"/>
    <property type="project" value="ComplexPortal"/>
</dbReference>
<dbReference type="GO" id="GO:0031931">
    <property type="term" value="C:TORC1 complex"/>
    <property type="evidence" value="ECO:0000314"/>
    <property type="project" value="UniProtKB"/>
</dbReference>
<dbReference type="GO" id="GO:0031932">
    <property type="term" value="C:TORC2 complex"/>
    <property type="evidence" value="ECO:0000314"/>
    <property type="project" value="UniProtKB"/>
</dbReference>
<dbReference type="GO" id="GO:0110078">
    <property type="term" value="C:TTT Hsp90 cochaperone complex"/>
    <property type="evidence" value="ECO:0000353"/>
    <property type="project" value="ComplexPortal"/>
</dbReference>
<dbReference type="GO" id="GO:2000003">
    <property type="term" value="P:positive regulation of DNA damage checkpoint"/>
    <property type="evidence" value="ECO:0000315"/>
    <property type="project" value="UniProtKB"/>
</dbReference>
<dbReference type="GO" id="GO:0050821">
    <property type="term" value="P:protein stabilization"/>
    <property type="evidence" value="ECO:0000303"/>
    <property type="project" value="ComplexPortal"/>
</dbReference>
<dbReference type="GO" id="GO:0032006">
    <property type="term" value="P:regulation of TOR signaling"/>
    <property type="evidence" value="ECO:0000315"/>
    <property type="project" value="UniProtKB"/>
</dbReference>
<dbReference type="FunFam" id="1.25.10.10:FF:000229">
    <property type="entry name" value="TELO2-interacting protein 1 homolog"/>
    <property type="match status" value="1"/>
</dbReference>
<dbReference type="FunFam" id="1.25.10.10:FF:000240">
    <property type="entry name" value="TELO2-interacting protein 1 homolog"/>
    <property type="match status" value="1"/>
</dbReference>
<dbReference type="Gene3D" id="1.25.10.10">
    <property type="entry name" value="Leucine-rich Repeat Variant"/>
    <property type="match status" value="2"/>
</dbReference>
<dbReference type="InterPro" id="IPR011989">
    <property type="entry name" value="ARM-like"/>
</dbReference>
<dbReference type="InterPro" id="IPR016024">
    <property type="entry name" value="ARM-type_fold"/>
</dbReference>
<dbReference type="InterPro" id="IPR052587">
    <property type="entry name" value="TELO2-interacting_protein_1"/>
</dbReference>
<dbReference type="InterPro" id="IPR016441">
    <property type="entry name" value="Tti1"/>
</dbReference>
<dbReference type="InterPro" id="IPR049362">
    <property type="entry name" value="TTI1_rpt"/>
</dbReference>
<dbReference type="PANTHER" id="PTHR18460">
    <property type="entry name" value="TEL2 INTERACTING PROTEIN 1 TTI1 FAMILY MEMBER"/>
    <property type="match status" value="1"/>
</dbReference>
<dbReference type="PANTHER" id="PTHR18460:SF3">
    <property type="entry name" value="TELO2-INTERACTING PROTEIN 1 HOMOLOG"/>
    <property type="match status" value="1"/>
</dbReference>
<dbReference type="Pfam" id="PF24176">
    <property type="entry name" value="TPR_TTI1_2nd"/>
    <property type="match status" value="1"/>
</dbReference>
<dbReference type="Pfam" id="PF24181">
    <property type="entry name" value="TPR_TTI1_C"/>
    <property type="match status" value="1"/>
</dbReference>
<dbReference type="Pfam" id="PF24173">
    <property type="entry name" value="TPR_TTI1_N"/>
    <property type="match status" value="1"/>
</dbReference>
<dbReference type="Pfam" id="PF21547">
    <property type="entry name" value="TTI1"/>
    <property type="match status" value="1"/>
</dbReference>
<dbReference type="PIRSF" id="PIRSF005250">
    <property type="entry name" value="UCP005250"/>
    <property type="match status" value="1"/>
</dbReference>
<dbReference type="SUPFAM" id="SSF48371">
    <property type="entry name" value="ARM repeat"/>
    <property type="match status" value="1"/>
</dbReference>